<sequence length="2089" mass="227870">MTLPNNVVLFGDQTVDPCPIIKQLYRQSRDSLTLQTLFRQSYDAVRREIATSEASDRALFPSFDSFQDLAEKQNERHNEAVSTVLLCIAQLGLLMIHVDQDDSTFDARPSRTYLVGLCTGMLPAAALAASSSTSQLLRLAPEIVLVALRLGLEANRRSAQIEASTESWASVVPGMAPQEQQEALAQFNDEFMIPTSKQAYISAESDSSATLSGPPSTLLSLFSSSDIFKKARRIKLPITAAFHAPHLRVPDVEKILGSLSHSDEYPLRNDVVIVSTRSGKPITAQSLGDALQHIIMDILREPMRWSRVVEEMINGLKDQGAILTSAGPVRAADSLRQRMASAGIEVSRSTEMQPRQEQRTKPRSSDIAIIGYAARLPESETLEEVWKILEDGRDVHKKIPSDRFDVDTHCDPSGKIKNTSYTPYGCFLDRPGFFDARLFNMSPREASQTDPAQRLLLLTTYEALEMAGYTPDGTPSTAGDRIGTFFGQTLDDYREANASQNIEMYYVSGGIRAFGPGRLNYHFKWEGPSYCVDAACSSSTLSIQMAMSSLRAHECDTAVAGGTNVLTGVDMFSGLSRGSFLSPTGSCKTFDNDADGYCRGDGVGSVILKRLDDAIADGDNIQAVIKSAATNHSAHAVSITHPHAGAQQNLMRQVLREGDVEPADIDYVEMHGTGTQAGDATEFASVTNVITGRTRDNPLHVGAVKANFGHAEAAAGTNSLVKVLMMMRKNAIPPHIGIKGRINEKFPPLDKINVRINRTMTPFVARAGGDGKRRVLLNNFNATGGNTSLLIEDAPKTDIQGHDLRSAHVVAISAKTPYSFRQNTQRLLEYLQLNPETQLQDLSYTTTARRMHHVIRKAYAVQSIEQLVQSLKKDISSSSEPGATTEHSSAVFLFTGQGSQYLGMGRQLYQTNKAFRKSISESDSICIRQGLPSFEWIVSAEPSEERITSPSESQLALVAIALALASLWQSWGITPKAVMGHSLGEYAALCVAGVLSISDTLYLVGKRAQMMEKKCIANTHSMLAIQSDSESIQQIISGGQMPSCEIACLNGPSNTVVSGSLTDIHSLEEKLNAMGTKTTLLKLPFAFHSVQMDPILEDIRALAQNVQFRKPIVPIASTLLGTLVKDHGIITADYLTRQARQAVRFQEALQACRAENIATDDTLWVEVGAHPLCHGMVRSTLGLSPTKALPSLKRDEDCWSTISRSIANAYNSGVKVSWIDYHRDFQGALRLLELPSYAFDLKNYWIQHEGDWSLRKGETTRTTAPPPQASFSTTCLQVIENETFTQDSASVTFSSQLSEPKLNTAVRGHLVSGTGLCPSSVYADVAFTAAWYIASRMTPSDPVPAMDLSSMEVFRPLIVDSNETSQLLRVSATRNPNEQIVNIKISSQDDKGRQEHAHCTVMYGDGHQWMEEWQRNAYLIQSRIDKLTQPSSPGIHRMLKEMIYKQFQTVVTYSPEYHNIDEIFMDCDLNETAANIKLQSTAGHGEFIYSPYWIDTVAHLAGFILNANVKTPADTVFISHGWQSFQIAAPLSAEKTYRGYVRMQPSSGRGVMAGDVYIFDGDEIVVVCKGIKFQQMKRTTLQSLLGVSPAATPTSKSIAAKSTRPQLVTVRKAAVTQSPVAGFSKVLDTIASEVGVDVSELSDDVKISDVGVDSLLTISILGRLRPETGLDLSSSLFIEHPTIAELRAFFLDKMDMPQATANDDDSDDSSDDEGPGFSRSQSNSTISTPEEPDVVNVLMSIIAREVGIQESEIQLSTPFAEIGVDSLLTISILDALKTEIGMNLSANFFHDHPTFADVQKALGAAPTPQKPLDLPLARLEQSPRPSSQALRAKSVLLQGRPEKGKPALFLLPDGAGSLFSYISLPSLPSGLPIYGLDSPFHNNPSEFTISFSDVATIYIAAIRAIQPKGPYMLGGWSLGGIHAYETARQLIEQGETISNLIMIDSPCPGTLPPLPAPTLSLLEKAGIFDGLSTSGAPITERTRLHFLGCVRALENYTVTPLPPGKSPGKVTVIWAQDGVLEGREEQGKEYMAATSSGDLNKDMDKAKEWLTGKRTSFGPSGWDKLTGTEVHCHVVGGNHFSIMFPPKVC</sequence>
<organism>
    <name type="scientific">Cladonia grayi</name>
    <name type="common">Gray's cup lichen</name>
    <dbReference type="NCBI Taxonomy" id="27339"/>
    <lineage>
        <taxon>Eukaryota</taxon>
        <taxon>Fungi</taxon>
        <taxon>Dikarya</taxon>
        <taxon>Ascomycota</taxon>
        <taxon>Pezizomycotina</taxon>
        <taxon>Lecanoromycetes</taxon>
        <taxon>OSLEUM clade</taxon>
        <taxon>Lecanoromycetidae</taxon>
        <taxon>Lecanorales</taxon>
        <taxon>Lecanorineae</taxon>
        <taxon>Cladoniaceae</taxon>
        <taxon>Cladonia</taxon>
    </lineage>
</organism>
<feature type="chain" id="PRO_0000445362" description="Non-reducing polyketide synthase PKS16">
    <location>
        <begin position="1"/>
        <end position="2089"/>
    </location>
</feature>
<feature type="domain" description="Ketosynthase family 3 (KS3)" evidence="4 9">
    <location>
        <begin position="364"/>
        <end position="793"/>
    </location>
</feature>
<feature type="domain" description="PKS/mFAS DH" evidence="5">
    <location>
        <begin position="1276"/>
        <end position="1582"/>
    </location>
</feature>
<feature type="domain" description="Carrier 1" evidence="3">
    <location>
        <begin position="1617"/>
        <end position="1694"/>
    </location>
</feature>
<feature type="domain" description="Carrier 2" evidence="3">
    <location>
        <begin position="1729"/>
        <end position="1806"/>
    </location>
</feature>
<feature type="region of interest" description="N-terminal acylcarrier protein transacylase (SAT) domain (SAT)" evidence="2 9">
    <location>
        <begin position="8"/>
        <end position="243"/>
    </location>
</feature>
<feature type="region of interest" description="Disordered" evidence="6">
    <location>
        <begin position="342"/>
        <end position="364"/>
    </location>
</feature>
<feature type="region of interest" description="Malonyl-CoA:ACP transacylase (MAT) domain" evidence="2 9">
    <location>
        <begin position="891"/>
        <end position="1214"/>
    </location>
</feature>
<feature type="region of interest" description="Product template (PT) domain" evidence="2 9">
    <location>
        <begin position="1273"/>
        <end position="1586"/>
    </location>
</feature>
<feature type="region of interest" description="N-terminal hotdog fold" evidence="5">
    <location>
        <begin position="1276"/>
        <end position="1408"/>
    </location>
</feature>
<feature type="region of interest" description="C-terminal hotdog fold" evidence="5">
    <location>
        <begin position="1435"/>
        <end position="1582"/>
    </location>
</feature>
<feature type="region of interest" description="Disordered" evidence="6">
    <location>
        <begin position="1697"/>
        <end position="1730"/>
    </location>
</feature>
<feature type="region of interest" description="Thioesterase (TE) domain" evidence="2 9">
    <location>
        <begin position="1848"/>
        <end position="2083"/>
    </location>
</feature>
<feature type="compositionally biased region" description="Basic and acidic residues" evidence="6">
    <location>
        <begin position="354"/>
        <end position="364"/>
    </location>
</feature>
<feature type="compositionally biased region" description="Acidic residues" evidence="6">
    <location>
        <begin position="1702"/>
        <end position="1714"/>
    </location>
</feature>
<feature type="compositionally biased region" description="Polar residues" evidence="6">
    <location>
        <begin position="1718"/>
        <end position="1728"/>
    </location>
</feature>
<feature type="active site" description="For beta-ketoacyl synthase activity" evidence="4">
    <location>
        <position position="536"/>
    </location>
</feature>
<feature type="active site" description="For beta-ketoacyl synthase activity" evidence="4">
    <location>
        <position position="671"/>
    </location>
</feature>
<feature type="active site" description="For beta-ketoacyl synthase activity" evidence="4">
    <location>
        <position position="710"/>
    </location>
</feature>
<feature type="active site" description="Proton acceptor; for dehydratase activity" evidence="5">
    <location>
        <position position="1309"/>
    </location>
</feature>
<feature type="active site" description="Proton donor; for dehydratase activity" evidence="5">
    <location>
        <position position="1495"/>
    </location>
</feature>
<feature type="modified residue" description="O-(pantetheine 4'-phosphoryl)serine" evidence="3">
    <location>
        <position position="1654"/>
    </location>
</feature>
<feature type="modified residue" description="O-(pantetheine 4'-phosphoryl)serine" evidence="3">
    <location>
        <position position="1766"/>
    </location>
</feature>
<name>GRA1_CLAGR</name>
<protein>
    <recommendedName>
        <fullName evidence="8">Non-reducing polyketide synthase PKS16</fullName>
        <shortName evidence="8">NR-PKS PKS16</shortName>
        <ecNumber evidence="9">2.3.1.-</ecNumber>
    </recommendedName>
    <alternativeName>
        <fullName evidence="8">Grayanic acid biosynthesis cluster PKS</fullName>
    </alternativeName>
</protein>
<dbReference type="EC" id="2.3.1.-" evidence="9"/>
<dbReference type="EMBL" id="GU930713">
    <property type="protein sequence ID" value="ADM79459.1"/>
    <property type="molecule type" value="Genomic_DNA"/>
</dbReference>
<dbReference type="SMR" id="E9KMQ2"/>
<dbReference type="ESTHER" id="clagr-gra1">
    <property type="family name" value="Thioesterase"/>
</dbReference>
<dbReference type="BioCyc" id="MetaCyc:MONOMER-21839"/>
<dbReference type="GO" id="GO:0004315">
    <property type="term" value="F:3-oxoacyl-[acyl-carrier-protein] synthase activity"/>
    <property type="evidence" value="ECO:0007669"/>
    <property type="project" value="InterPro"/>
</dbReference>
<dbReference type="GO" id="GO:0004312">
    <property type="term" value="F:fatty acid synthase activity"/>
    <property type="evidence" value="ECO:0007669"/>
    <property type="project" value="TreeGrafter"/>
</dbReference>
<dbReference type="GO" id="GO:0031177">
    <property type="term" value="F:phosphopantetheine binding"/>
    <property type="evidence" value="ECO:0007669"/>
    <property type="project" value="InterPro"/>
</dbReference>
<dbReference type="GO" id="GO:0006633">
    <property type="term" value="P:fatty acid biosynthetic process"/>
    <property type="evidence" value="ECO:0007669"/>
    <property type="project" value="InterPro"/>
</dbReference>
<dbReference type="GO" id="GO:0030639">
    <property type="term" value="P:polyketide biosynthetic process"/>
    <property type="evidence" value="ECO:0007669"/>
    <property type="project" value="UniProtKB-ARBA"/>
</dbReference>
<dbReference type="GO" id="GO:0009403">
    <property type="term" value="P:toxin biosynthetic process"/>
    <property type="evidence" value="ECO:0007669"/>
    <property type="project" value="UniProtKB-ARBA"/>
</dbReference>
<dbReference type="CDD" id="cd00833">
    <property type="entry name" value="PKS"/>
    <property type="match status" value="1"/>
</dbReference>
<dbReference type="FunFam" id="3.40.366.10:FF:000002">
    <property type="entry name" value="Probable polyketide synthase 2"/>
    <property type="match status" value="1"/>
</dbReference>
<dbReference type="FunFam" id="1.10.1200.10:FF:000011">
    <property type="entry name" value="Sterigmatocystin biosynthesis polyketide synthase"/>
    <property type="match status" value="1"/>
</dbReference>
<dbReference type="FunFam" id="3.10.129.110:FF:000001">
    <property type="entry name" value="Sterigmatocystin biosynthesis polyketide synthase"/>
    <property type="match status" value="1"/>
</dbReference>
<dbReference type="Gene3D" id="3.30.70.3290">
    <property type="match status" value="1"/>
</dbReference>
<dbReference type="Gene3D" id="3.40.47.10">
    <property type="match status" value="1"/>
</dbReference>
<dbReference type="Gene3D" id="1.10.1200.10">
    <property type="entry name" value="ACP-like"/>
    <property type="match status" value="2"/>
</dbReference>
<dbReference type="Gene3D" id="3.40.50.1820">
    <property type="entry name" value="alpha/beta hydrolase"/>
    <property type="match status" value="1"/>
</dbReference>
<dbReference type="Gene3D" id="3.30.70.250">
    <property type="entry name" value="Malonyl-CoA ACP transacylase, ACP-binding"/>
    <property type="match status" value="1"/>
</dbReference>
<dbReference type="Gene3D" id="3.40.366.10">
    <property type="entry name" value="Malonyl-Coenzyme A Acyl Carrier Protein, domain 2"/>
    <property type="match status" value="2"/>
</dbReference>
<dbReference type="Gene3D" id="3.10.129.110">
    <property type="entry name" value="Polyketide synthase dehydratase"/>
    <property type="match status" value="1"/>
</dbReference>
<dbReference type="InterPro" id="IPR029058">
    <property type="entry name" value="AB_hydrolase_fold"/>
</dbReference>
<dbReference type="InterPro" id="IPR001227">
    <property type="entry name" value="Ac_transferase_dom_sf"/>
</dbReference>
<dbReference type="InterPro" id="IPR036736">
    <property type="entry name" value="ACP-like_sf"/>
</dbReference>
<dbReference type="InterPro" id="IPR014043">
    <property type="entry name" value="Acyl_transferase_dom"/>
</dbReference>
<dbReference type="InterPro" id="IPR016035">
    <property type="entry name" value="Acyl_Trfase/lysoPLipase"/>
</dbReference>
<dbReference type="InterPro" id="IPR018201">
    <property type="entry name" value="Ketoacyl_synth_AS"/>
</dbReference>
<dbReference type="InterPro" id="IPR014031">
    <property type="entry name" value="Ketoacyl_synth_C"/>
</dbReference>
<dbReference type="InterPro" id="IPR014030">
    <property type="entry name" value="Ketoacyl_synth_N"/>
</dbReference>
<dbReference type="InterPro" id="IPR016036">
    <property type="entry name" value="Malonyl_transacylase_ACP-bd"/>
</dbReference>
<dbReference type="InterPro" id="IPR020841">
    <property type="entry name" value="PKS_Beta-ketoAc_synthase_dom"/>
</dbReference>
<dbReference type="InterPro" id="IPR042104">
    <property type="entry name" value="PKS_dehydratase_sf"/>
</dbReference>
<dbReference type="InterPro" id="IPR049551">
    <property type="entry name" value="PKS_DH_C"/>
</dbReference>
<dbReference type="InterPro" id="IPR049900">
    <property type="entry name" value="PKS_mFAS_DH"/>
</dbReference>
<dbReference type="InterPro" id="IPR050091">
    <property type="entry name" value="PKS_NRPS_Biosynth_Enz"/>
</dbReference>
<dbReference type="InterPro" id="IPR020806">
    <property type="entry name" value="PKS_PP-bd"/>
</dbReference>
<dbReference type="InterPro" id="IPR009081">
    <property type="entry name" value="PP-bd_ACP"/>
</dbReference>
<dbReference type="InterPro" id="IPR030918">
    <property type="entry name" value="PT_fungal_PKS"/>
</dbReference>
<dbReference type="InterPro" id="IPR032088">
    <property type="entry name" value="SAT"/>
</dbReference>
<dbReference type="InterPro" id="IPR001031">
    <property type="entry name" value="Thioesterase"/>
</dbReference>
<dbReference type="InterPro" id="IPR016039">
    <property type="entry name" value="Thiolase-like"/>
</dbReference>
<dbReference type="NCBIfam" id="TIGR04532">
    <property type="entry name" value="PT_fungal_PKS"/>
    <property type="match status" value="1"/>
</dbReference>
<dbReference type="PANTHER" id="PTHR43775">
    <property type="entry name" value="FATTY ACID SYNTHASE"/>
    <property type="match status" value="1"/>
</dbReference>
<dbReference type="PANTHER" id="PTHR43775:SF37">
    <property type="entry name" value="SI:DKEY-61P9.11"/>
    <property type="match status" value="1"/>
</dbReference>
<dbReference type="Pfam" id="PF00698">
    <property type="entry name" value="Acyl_transf_1"/>
    <property type="match status" value="1"/>
</dbReference>
<dbReference type="Pfam" id="PF22621">
    <property type="entry name" value="CurL-like_PKS_C"/>
    <property type="match status" value="1"/>
</dbReference>
<dbReference type="Pfam" id="PF00109">
    <property type="entry name" value="ketoacyl-synt"/>
    <property type="match status" value="1"/>
</dbReference>
<dbReference type="Pfam" id="PF02801">
    <property type="entry name" value="Ketoacyl-synt_C"/>
    <property type="match status" value="1"/>
</dbReference>
<dbReference type="Pfam" id="PF00550">
    <property type="entry name" value="PP-binding"/>
    <property type="match status" value="2"/>
</dbReference>
<dbReference type="Pfam" id="PF14765">
    <property type="entry name" value="PS-DH"/>
    <property type="match status" value="1"/>
</dbReference>
<dbReference type="Pfam" id="PF16073">
    <property type="entry name" value="SAT"/>
    <property type="match status" value="1"/>
</dbReference>
<dbReference type="Pfam" id="PF00975">
    <property type="entry name" value="Thioesterase"/>
    <property type="match status" value="1"/>
</dbReference>
<dbReference type="SMART" id="SM00827">
    <property type="entry name" value="PKS_AT"/>
    <property type="match status" value="1"/>
</dbReference>
<dbReference type="SMART" id="SM00825">
    <property type="entry name" value="PKS_KS"/>
    <property type="match status" value="1"/>
</dbReference>
<dbReference type="SMART" id="SM00823">
    <property type="entry name" value="PKS_PP"/>
    <property type="match status" value="2"/>
</dbReference>
<dbReference type="SUPFAM" id="SSF47336">
    <property type="entry name" value="ACP-like"/>
    <property type="match status" value="2"/>
</dbReference>
<dbReference type="SUPFAM" id="SSF53474">
    <property type="entry name" value="alpha/beta-Hydrolases"/>
    <property type="match status" value="1"/>
</dbReference>
<dbReference type="SUPFAM" id="SSF52151">
    <property type="entry name" value="FabD/lysophospholipase-like"/>
    <property type="match status" value="2"/>
</dbReference>
<dbReference type="SUPFAM" id="SSF55048">
    <property type="entry name" value="Probable ACP-binding domain of malonyl-CoA ACP transacylase"/>
    <property type="match status" value="1"/>
</dbReference>
<dbReference type="SUPFAM" id="SSF53901">
    <property type="entry name" value="Thiolase-like"/>
    <property type="match status" value="1"/>
</dbReference>
<dbReference type="PROSITE" id="PS50075">
    <property type="entry name" value="CARRIER"/>
    <property type="match status" value="2"/>
</dbReference>
<dbReference type="PROSITE" id="PS00606">
    <property type="entry name" value="KS3_1"/>
    <property type="match status" value="1"/>
</dbReference>
<dbReference type="PROSITE" id="PS52004">
    <property type="entry name" value="KS3_2"/>
    <property type="match status" value="1"/>
</dbReference>
<dbReference type="PROSITE" id="PS52019">
    <property type="entry name" value="PKS_MFAS_DH"/>
    <property type="match status" value="1"/>
</dbReference>
<evidence type="ECO:0000250" key="1">
    <source>
        <dbReference type="UniProtKB" id="Q5B0D0"/>
    </source>
</evidence>
<evidence type="ECO:0000255" key="2"/>
<evidence type="ECO:0000255" key="3">
    <source>
        <dbReference type="PROSITE-ProRule" id="PRU00258"/>
    </source>
</evidence>
<evidence type="ECO:0000255" key="4">
    <source>
        <dbReference type="PROSITE-ProRule" id="PRU01348"/>
    </source>
</evidence>
<evidence type="ECO:0000255" key="5">
    <source>
        <dbReference type="PROSITE-ProRule" id="PRU01363"/>
    </source>
</evidence>
<evidence type="ECO:0000256" key="6">
    <source>
        <dbReference type="SAM" id="MobiDB-lite"/>
    </source>
</evidence>
<evidence type="ECO:0000269" key="7">
    <source>
    </source>
</evidence>
<evidence type="ECO:0000303" key="8">
    <source>
    </source>
</evidence>
<evidence type="ECO:0000305" key="9">
    <source>
    </source>
</evidence>
<evidence type="ECO:0000305" key="10">
    <source ref="2"/>
</evidence>
<reference key="1">
    <citation type="journal article" date="2011" name="Mycologia">
        <title>Insights from the first putative biosynthetic gene cluster for a lichen depside and depsidone.</title>
        <authorList>
            <person name="Armaleo D."/>
            <person name="Sun X."/>
            <person name="Culberson C."/>
        </authorList>
    </citation>
    <scope>NUCLEOTIDE SEQUENCE [GENOMIC DNA]</scope>
    <scope>INDUCTION</scope>
    <scope>FUNCTION</scope>
</reference>
<reference key="2">
    <citation type="journal article" date="1992" name="Exp. Mycol.">
        <title>Induction of a complete secondary-product pathway in a cultured lichen fungus.</title>
        <authorList>
            <person name="Culberson C."/>
            <person name="Armaleo D."/>
        </authorList>
    </citation>
    <scope>FUNCTION</scope>
</reference>
<keyword id="KW-0511">Multifunctional enzyme</keyword>
<keyword id="KW-0596">Phosphopantetheine</keyword>
<keyword id="KW-0597">Phosphoprotein</keyword>
<keyword id="KW-0677">Repeat</keyword>
<keyword id="KW-0808">Transferase</keyword>
<proteinExistence type="evidence at transcript level"/>
<comment type="function">
    <text evidence="7 9 10">Non-reducing polyketide synthase; part of the gene cluster that mediates the biosynthesis of orcinol depsidone grayanic acid (GRA), the only major secondary metabolite known in C.grayi (PubMed:21289108). The first step consists in the ring and depside synthesis by PKS16 leading to 4-O-demethylsphaerophorin, involving different orcinol-like rings, one with acetyl CoA and the other with octanoyl CoA as the starter (Probable). Further depsidone formation by the GRA cluster-specific cytochrome P450 leads to 4-O-demethylgrayanic acid (Probable). Finally, the cluster specific O-methyltransferase probably converts the 4-O-demethylgrayanic acid into grayanic acid (Probable).</text>
</comment>
<comment type="pathway">
    <text evidence="9">Secondary metabolite biosynthesis.</text>
</comment>
<comment type="induction">
    <text evidence="7">Expression is induced during grayanic acid production conditions.</text>
</comment>
<comment type="domain">
    <text evidence="1 9">Multidomain protein; including a starter unit:ACP transacylase (SAT) that selects the starter unit; a ketosynthase (KS) that catalyzes repeated decarboxylative condensation to elongate the polyketide backbone; a malonyl-CoA:ACP transacylase (MAT) that selects and transfers the extender unit malonyl-CoA; a product template (PT) domain that controls the immediate cyclization regioselectivity of the reactive polyketide backbone; and an acyl-carrier protein (ACP) that serves as the tether of the growing and completed polyketide via its phosphopantetheinyl arm.</text>
</comment>
<gene>
    <name evidence="8" type="primary">PKS16</name>
</gene>
<accession>E9KMQ2</accession>